<dbReference type="EC" id="2.7.11.1"/>
<dbReference type="EMBL" id="AL645808">
    <property type="status" value="NOT_ANNOTATED_CDS"/>
    <property type="molecule type" value="Genomic_DNA"/>
</dbReference>
<dbReference type="SMR" id="Q5SUV5"/>
<dbReference type="FunCoup" id="Q5SUV5">
    <property type="interactions" value="343"/>
</dbReference>
<dbReference type="STRING" id="10090.ENSMUSP00000060149"/>
<dbReference type="iPTMnet" id="Q5SUV5"/>
<dbReference type="PhosphoSitePlus" id="Q5SUV5"/>
<dbReference type="jPOST" id="Q5SUV5"/>
<dbReference type="PaxDb" id="10090-ENSMUSP00000060149"/>
<dbReference type="ProteomicsDB" id="287658"/>
<dbReference type="AGR" id="MGI:3643758"/>
<dbReference type="MGI" id="MGI:3643758">
    <property type="gene designation" value="Mylk4"/>
</dbReference>
<dbReference type="eggNOG" id="KOG0032">
    <property type="taxonomic scope" value="Eukaryota"/>
</dbReference>
<dbReference type="InParanoid" id="Q5SUV5"/>
<dbReference type="PhylomeDB" id="Q5SUV5"/>
<dbReference type="ChiTaRS" id="Mylk4">
    <property type="organism name" value="mouse"/>
</dbReference>
<dbReference type="PRO" id="PR:Q5SUV5"/>
<dbReference type="Proteomes" id="UP000000589">
    <property type="component" value="Unplaced"/>
</dbReference>
<dbReference type="RNAct" id="Q5SUV5">
    <property type="molecule type" value="protein"/>
</dbReference>
<dbReference type="GO" id="GO:0005524">
    <property type="term" value="F:ATP binding"/>
    <property type="evidence" value="ECO:0007669"/>
    <property type="project" value="UniProtKB-KW"/>
</dbReference>
<dbReference type="GO" id="GO:0106310">
    <property type="term" value="F:protein serine kinase activity"/>
    <property type="evidence" value="ECO:0007669"/>
    <property type="project" value="RHEA"/>
</dbReference>
<dbReference type="GO" id="GO:0004674">
    <property type="term" value="F:protein serine/threonine kinase activity"/>
    <property type="evidence" value="ECO:0007669"/>
    <property type="project" value="UniProtKB-KW"/>
</dbReference>
<dbReference type="FunFam" id="3.30.200.20:FF:000196">
    <property type="entry name" value="Myosin light chain kinase family, member 4"/>
    <property type="match status" value="1"/>
</dbReference>
<dbReference type="FunFam" id="1.10.510.10:FF:000135">
    <property type="entry name" value="Putative myosin light chain kinase 3"/>
    <property type="match status" value="1"/>
</dbReference>
<dbReference type="Gene3D" id="3.30.200.20">
    <property type="entry name" value="Phosphorylase Kinase, domain 1"/>
    <property type="match status" value="1"/>
</dbReference>
<dbReference type="Gene3D" id="1.10.510.10">
    <property type="entry name" value="Transferase(Phosphotransferase) domain 1"/>
    <property type="match status" value="1"/>
</dbReference>
<dbReference type="InterPro" id="IPR011009">
    <property type="entry name" value="Kinase-like_dom_sf"/>
</dbReference>
<dbReference type="InterPro" id="IPR000719">
    <property type="entry name" value="Prot_kinase_dom"/>
</dbReference>
<dbReference type="InterPro" id="IPR017441">
    <property type="entry name" value="Protein_kinase_ATP_BS"/>
</dbReference>
<dbReference type="InterPro" id="IPR008271">
    <property type="entry name" value="Ser/Thr_kinase_AS"/>
</dbReference>
<dbReference type="PANTHER" id="PTHR24342:SF20">
    <property type="entry name" value="MYOSIN LIGHT CHAIN KINASE, SMOOTH MUSCLE"/>
    <property type="match status" value="1"/>
</dbReference>
<dbReference type="PANTHER" id="PTHR24342">
    <property type="entry name" value="SERINE/THREONINE-PROTEIN KINASE 17"/>
    <property type="match status" value="1"/>
</dbReference>
<dbReference type="Pfam" id="PF00069">
    <property type="entry name" value="Pkinase"/>
    <property type="match status" value="1"/>
</dbReference>
<dbReference type="SMART" id="SM00220">
    <property type="entry name" value="S_TKc"/>
    <property type="match status" value="1"/>
</dbReference>
<dbReference type="SUPFAM" id="SSF56112">
    <property type="entry name" value="Protein kinase-like (PK-like)"/>
    <property type="match status" value="1"/>
</dbReference>
<dbReference type="PROSITE" id="PS00107">
    <property type="entry name" value="PROTEIN_KINASE_ATP"/>
    <property type="match status" value="1"/>
</dbReference>
<dbReference type="PROSITE" id="PS50011">
    <property type="entry name" value="PROTEIN_KINASE_DOM"/>
    <property type="match status" value="1"/>
</dbReference>
<dbReference type="PROSITE" id="PS00108">
    <property type="entry name" value="PROTEIN_KINASE_ST"/>
    <property type="match status" value="1"/>
</dbReference>
<name>MYLK4_MOUSE</name>
<organism>
    <name type="scientific">Mus musculus</name>
    <name type="common">Mouse</name>
    <dbReference type="NCBI Taxonomy" id="10090"/>
    <lineage>
        <taxon>Eukaryota</taxon>
        <taxon>Metazoa</taxon>
        <taxon>Chordata</taxon>
        <taxon>Craniata</taxon>
        <taxon>Vertebrata</taxon>
        <taxon>Euteleostomi</taxon>
        <taxon>Mammalia</taxon>
        <taxon>Eutheria</taxon>
        <taxon>Euarchontoglires</taxon>
        <taxon>Glires</taxon>
        <taxon>Rodentia</taxon>
        <taxon>Myomorpha</taxon>
        <taxon>Muroidea</taxon>
        <taxon>Muridae</taxon>
        <taxon>Murinae</taxon>
        <taxon>Mus</taxon>
        <taxon>Mus</taxon>
    </lineage>
</organism>
<reference key="1">
    <citation type="journal article" date="2009" name="PLoS Biol.">
        <title>Lineage-specific biology revealed by a finished genome assembly of the mouse.</title>
        <authorList>
            <person name="Church D.M."/>
            <person name="Goodstadt L."/>
            <person name="Hillier L.W."/>
            <person name="Zody M.C."/>
            <person name="Goldstein S."/>
            <person name="She X."/>
            <person name="Bult C.J."/>
            <person name="Agarwala R."/>
            <person name="Cherry J.L."/>
            <person name="DiCuccio M."/>
            <person name="Hlavina W."/>
            <person name="Kapustin Y."/>
            <person name="Meric P."/>
            <person name="Maglott D."/>
            <person name="Birtle Z."/>
            <person name="Marques A.C."/>
            <person name="Graves T."/>
            <person name="Zhou S."/>
            <person name="Teague B."/>
            <person name="Potamousis K."/>
            <person name="Churas C."/>
            <person name="Place M."/>
            <person name="Herschleb J."/>
            <person name="Runnheim R."/>
            <person name="Forrest D."/>
            <person name="Amos-Landgraf J."/>
            <person name="Schwartz D.C."/>
            <person name="Cheng Z."/>
            <person name="Lindblad-Toh K."/>
            <person name="Eichler E.E."/>
            <person name="Ponting C.P."/>
        </authorList>
    </citation>
    <scope>NUCLEOTIDE SEQUENCE [LARGE SCALE GENOMIC DNA]</scope>
    <source>
        <strain>C57BL/6J</strain>
    </source>
</reference>
<reference key="2">
    <citation type="journal article" date="2010" name="Cell">
        <title>A tissue-specific atlas of mouse protein phosphorylation and expression.</title>
        <authorList>
            <person name="Huttlin E.L."/>
            <person name="Jedrychowski M.P."/>
            <person name="Elias J.E."/>
            <person name="Goswami T."/>
            <person name="Rad R."/>
            <person name="Beausoleil S.A."/>
            <person name="Villen J."/>
            <person name="Haas W."/>
            <person name="Sowa M.E."/>
            <person name="Gygi S.P."/>
        </authorList>
    </citation>
    <scope>PHOSPHORYLATION [LARGE SCALE ANALYSIS] AT SER-100</scope>
    <scope>IDENTIFICATION BY MASS SPECTROMETRY [LARGE SCALE ANALYSIS]</scope>
    <source>
        <tissue>Heart</tissue>
    </source>
</reference>
<evidence type="ECO:0000255" key="1">
    <source>
        <dbReference type="PROSITE-ProRule" id="PRU00159"/>
    </source>
</evidence>
<evidence type="ECO:0000255" key="2">
    <source>
        <dbReference type="PROSITE-ProRule" id="PRU10027"/>
    </source>
</evidence>
<evidence type="ECO:0000305" key="3"/>
<evidence type="ECO:0007744" key="4">
    <source>
    </source>
</evidence>
<feature type="chain" id="PRO_0000261031" description="Myosin light chain kinase family member 4">
    <location>
        <begin position="1"/>
        <end position="386"/>
    </location>
</feature>
<feature type="domain" description="Protein kinase" evidence="1">
    <location>
        <begin position="107"/>
        <end position="361"/>
    </location>
</feature>
<feature type="active site" description="Proton acceptor" evidence="1 2">
    <location>
        <position position="227"/>
    </location>
</feature>
<feature type="binding site" evidence="1">
    <location>
        <begin position="113"/>
        <end position="121"/>
    </location>
    <ligand>
        <name>ATP</name>
        <dbReference type="ChEBI" id="CHEBI:30616"/>
    </ligand>
</feature>
<feature type="binding site" evidence="1">
    <location>
        <position position="136"/>
    </location>
    <ligand>
        <name>ATP</name>
        <dbReference type="ChEBI" id="CHEBI:30616"/>
    </ligand>
</feature>
<feature type="modified residue" description="Phosphoserine" evidence="4">
    <location>
        <position position="100"/>
    </location>
</feature>
<sequence>MLKVKRLEEISSCHSSNPLEKVAFFQCMEEVEKVKCFLEENSGDLDLQSGDNEAEENVWSNRALDERIIVKGGRTSALTDDIPAPAAPFDHRMVMAKHASVDNLYTVSKSEILGGGRFGQVHKCEEKATGLKLAAKIIKTRGAKDKEDVKNEISVMNQLDHVNLIQLYDAFESKHDIILVMDVEGGELFDRIIDENCNLTELDTILFMKQICEGIRYMHQMYILHLDLKPENILCVNRDAKQIKIIDFGLARRYKPREKLKVNFGTPEFLAPEVVNYDFVSFSTDMWSVGVITYMLLSGLSPFLGDNDAETLTNILACRWDLEDEEFQDISEEAKEFISKLLIKEKSWRISASEALKHPWLSDHKLHSRLSAQKNCNSGVLNLTTK</sequence>
<protein>
    <recommendedName>
        <fullName>Myosin light chain kinase family member 4</fullName>
        <ecNumber>2.7.11.1</ecNumber>
    </recommendedName>
    <alternativeName>
        <fullName>Sugen kinase 85</fullName>
        <shortName>SgK085</shortName>
    </alternativeName>
</protein>
<proteinExistence type="evidence at protein level"/>
<comment type="catalytic activity">
    <reaction>
        <text>L-seryl-[protein] + ATP = O-phospho-L-seryl-[protein] + ADP + H(+)</text>
        <dbReference type="Rhea" id="RHEA:17989"/>
        <dbReference type="Rhea" id="RHEA-COMP:9863"/>
        <dbReference type="Rhea" id="RHEA-COMP:11604"/>
        <dbReference type="ChEBI" id="CHEBI:15378"/>
        <dbReference type="ChEBI" id="CHEBI:29999"/>
        <dbReference type="ChEBI" id="CHEBI:30616"/>
        <dbReference type="ChEBI" id="CHEBI:83421"/>
        <dbReference type="ChEBI" id="CHEBI:456216"/>
        <dbReference type="EC" id="2.7.11.1"/>
    </reaction>
</comment>
<comment type="catalytic activity">
    <reaction>
        <text>L-threonyl-[protein] + ATP = O-phospho-L-threonyl-[protein] + ADP + H(+)</text>
        <dbReference type="Rhea" id="RHEA:46608"/>
        <dbReference type="Rhea" id="RHEA-COMP:11060"/>
        <dbReference type="Rhea" id="RHEA-COMP:11605"/>
        <dbReference type="ChEBI" id="CHEBI:15378"/>
        <dbReference type="ChEBI" id="CHEBI:30013"/>
        <dbReference type="ChEBI" id="CHEBI:30616"/>
        <dbReference type="ChEBI" id="CHEBI:61977"/>
        <dbReference type="ChEBI" id="CHEBI:456216"/>
        <dbReference type="EC" id="2.7.11.1"/>
    </reaction>
</comment>
<comment type="similarity">
    <text evidence="3">Belongs to the protein kinase superfamily. CAMK Ser/Thr protein kinase family.</text>
</comment>
<keyword id="KW-0067">ATP-binding</keyword>
<keyword id="KW-0418">Kinase</keyword>
<keyword id="KW-0547">Nucleotide-binding</keyword>
<keyword id="KW-0597">Phosphoprotein</keyword>
<keyword id="KW-1185">Reference proteome</keyword>
<keyword id="KW-0723">Serine/threonine-protein kinase</keyword>
<keyword id="KW-0808">Transferase</keyword>
<accession>Q5SUV5</accession>
<gene>
    <name type="primary">Mylk4</name>
    <name type="synonym">Sgk085</name>
</gene>